<comment type="function">
    <text evidence="1">Usually encoded in the trnK tRNA gene intron. Probably assists in splicing its own and other chloroplast group II introns.</text>
</comment>
<comment type="subcellular location">
    <subcellularLocation>
        <location>Plastid</location>
        <location>Chloroplast</location>
    </subcellularLocation>
</comment>
<comment type="similarity">
    <text evidence="1">Belongs to the intron maturase 2 family. MatK subfamily.</text>
</comment>
<sequence length="506" mass="61021">MKEYRVYLERARSRQQDFLYPLIFREYIYGLAYSHNFNRSIFVENGGYDNKYSLLNVKRLITRMYQQNHLIISANDSNKNPFWGYNKNFYSQIISEGFAIVVEIPFFLQLSSSLEEAEIIKSYKNVRSIHSIFPFLEDKFTYLNYVSDIRIPYPIHLEILVQILRYWVKDVPFFHLLRLFLYDFCNWNCFIPSKKSISTFSKSNPRLFLFLYNFYVCEYESIFLFLRNKSSHLRLKSFSVFFERIFFYAKREHLVEVFSKDFSYTLPFFKDPNIHYVRYQGKCILASKNVPFLMNKWKHYFIYLWQCFFDVWSQPRTININQLSEHSFQLLGYFSNVRLNRSVVRSQMLQNTFLIEIVSKKLDIIVPIIPLIRSLAKAKFCNVLGHPISKPVWADSSDFDIIERFLRICRNLSHYYNGSSKKKSLYRIKYILRLSCIKTLACKHKSTVRAFLKRSGSEELLEEFFTEEEEILSLIFPRDSFTLHRFHRNRIWYLDIIFSNDLVNDE</sequence>
<protein>
    <recommendedName>
        <fullName evidence="1">Maturase K</fullName>
    </recommendedName>
    <alternativeName>
        <fullName evidence="1">Intron maturase</fullName>
    </alternativeName>
</protein>
<evidence type="ECO:0000255" key="1">
    <source>
        <dbReference type="HAMAP-Rule" id="MF_01390"/>
    </source>
</evidence>
<reference key="1">
    <citation type="book" date="2003" name="Advances in legume systematics - part 10">
        <title>Phylogenetic analyses of tribes Trifolieae and Vicieae based on sequences of the plastid gene matK (Papilionoideae: Leguminosae).</title>
        <editorList>
            <person name="Klitgaard B.B."/>
            <person name="Bruneau A."/>
        </editorList>
        <authorList>
            <person name="Steele K.P."/>
            <person name="Wojciechowski M.F."/>
        </authorList>
    </citation>
    <scope>NUCLEOTIDE SEQUENCE [GENOMIC DNA]</scope>
</reference>
<geneLocation type="chloroplast"/>
<proteinExistence type="inferred from homology"/>
<dbReference type="EMBL" id="AF522133">
    <property type="protein sequence ID" value="AAM82125.1"/>
    <property type="molecule type" value="Genomic_DNA"/>
</dbReference>
<dbReference type="GO" id="GO:0009507">
    <property type="term" value="C:chloroplast"/>
    <property type="evidence" value="ECO:0007669"/>
    <property type="project" value="UniProtKB-SubCell"/>
</dbReference>
<dbReference type="GO" id="GO:0003723">
    <property type="term" value="F:RNA binding"/>
    <property type="evidence" value="ECO:0007669"/>
    <property type="project" value="UniProtKB-KW"/>
</dbReference>
<dbReference type="GO" id="GO:0006397">
    <property type="term" value="P:mRNA processing"/>
    <property type="evidence" value="ECO:0007669"/>
    <property type="project" value="UniProtKB-KW"/>
</dbReference>
<dbReference type="GO" id="GO:0008380">
    <property type="term" value="P:RNA splicing"/>
    <property type="evidence" value="ECO:0007669"/>
    <property type="project" value="UniProtKB-UniRule"/>
</dbReference>
<dbReference type="GO" id="GO:0008033">
    <property type="term" value="P:tRNA processing"/>
    <property type="evidence" value="ECO:0007669"/>
    <property type="project" value="UniProtKB-KW"/>
</dbReference>
<dbReference type="HAMAP" id="MF_01390">
    <property type="entry name" value="MatK"/>
    <property type="match status" value="1"/>
</dbReference>
<dbReference type="InterPro" id="IPR024937">
    <property type="entry name" value="Domain_X"/>
</dbReference>
<dbReference type="InterPro" id="IPR002866">
    <property type="entry name" value="Maturase_MatK"/>
</dbReference>
<dbReference type="InterPro" id="IPR024942">
    <property type="entry name" value="Maturase_MatK_N"/>
</dbReference>
<dbReference type="PANTHER" id="PTHR34811">
    <property type="entry name" value="MATURASE K"/>
    <property type="match status" value="1"/>
</dbReference>
<dbReference type="PANTHER" id="PTHR34811:SF1">
    <property type="entry name" value="MATURASE K"/>
    <property type="match status" value="1"/>
</dbReference>
<dbReference type="Pfam" id="PF01348">
    <property type="entry name" value="Intron_maturas2"/>
    <property type="match status" value="1"/>
</dbReference>
<dbReference type="Pfam" id="PF01824">
    <property type="entry name" value="MatK_N"/>
    <property type="match status" value="1"/>
</dbReference>
<organism>
    <name type="scientific">Trifolium spumosum</name>
    <name type="common">Mediterranean clover</name>
    <dbReference type="NCBI Taxonomy" id="97041"/>
    <lineage>
        <taxon>Eukaryota</taxon>
        <taxon>Viridiplantae</taxon>
        <taxon>Streptophyta</taxon>
        <taxon>Embryophyta</taxon>
        <taxon>Tracheophyta</taxon>
        <taxon>Spermatophyta</taxon>
        <taxon>Magnoliopsida</taxon>
        <taxon>eudicotyledons</taxon>
        <taxon>Gunneridae</taxon>
        <taxon>Pentapetalae</taxon>
        <taxon>rosids</taxon>
        <taxon>fabids</taxon>
        <taxon>Fabales</taxon>
        <taxon>Fabaceae</taxon>
        <taxon>Papilionoideae</taxon>
        <taxon>50 kb inversion clade</taxon>
        <taxon>NPAAA clade</taxon>
        <taxon>Hologalegina</taxon>
        <taxon>IRL clade</taxon>
        <taxon>Trifolieae</taxon>
        <taxon>Trifolium</taxon>
    </lineage>
</organism>
<accession>Q8MCM2</accession>
<name>MATK_TRISO</name>
<feature type="chain" id="PRO_0000143754" description="Maturase K">
    <location>
        <begin position="1"/>
        <end position="506"/>
    </location>
</feature>
<keyword id="KW-0150">Chloroplast</keyword>
<keyword id="KW-0507">mRNA processing</keyword>
<keyword id="KW-0934">Plastid</keyword>
<keyword id="KW-0694">RNA-binding</keyword>
<keyword id="KW-0819">tRNA processing</keyword>
<gene>
    <name evidence="1" type="primary">matK</name>
</gene>